<protein>
    <recommendedName>
        <fullName evidence="1">Argininosuccinate synthase</fullName>
        <ecNumber evidence="1">6.3.4.5</ecNumber>
    </recommendedName>
    <alternativeName>
        <fullName evidence="1">Citrulline--aspartate ligase</fullName>
    </alternativeName>
</protein>
<proteinExistence type="inferred from homology"/>
<sequence>MTTILKHLPVGQRIGIAFSGGLDTSAALLWMRQKGAVPYAYTANLGQPDEEDYDAIPRRAMEYGAENARLIDCRKQLVAEGIAAIQCGAFHNTTGGLTYFNTTPLGRAVTGTMLVAAMKEDGVNIWGDGSTYKGNDIERFYRYGLLTNAELQIYKPWLDTDFIDELGGRHEMSEFMIACGFDYKMSVEKAYSTDSNMLGATHEAKDLEYLNSSVKIVNPIMGVKFWDESVKIPAEEVTVRFEQGHPVALNGKTFSNDVEMMLEANRIGGRHGLGMSDQIENRIIEAKSRGIYEAPGMALLHIAYERLLTGIHNEDTIEQYHAHGRQLGRLLYQGRWFDSQALMLRDSLQRWVASQITGEVTLELRRGNDYSILNTVSENLTYKPERLTMEKGDSVFSPDDRIGQLTMRNLDITDTREKLFGYAKTGLLSSSATSGVPQVENMENKGQ</sequence>
<evidence type="ECO:0000255" key="1">
    <source>
        <dbReference type="HAMAP-Rule" id="MF_00581"/>
    </source>
</evidence>
<feature type="chain" id="PRO_1000025441" description="Argininosuccinate synthase">
    <location>
        <begin position="1"/>
        <end position="447"/>
    </location>
</feature>
<feature type="binding site" evidence="1">
    <location>
        <begin position="17"/>
        <end position="25"/>
    </location>
    <ligand>
        <name>ATP</name>
        <dbReference type="ChEBI" id="CHEBI:30616"/>
    </ligand>
</feature>
<feature type="binding site" evidence="1">
    <location>
        <position position="43"/>
    </location>
    <ligand>
        <name>ATP</name>
        <dbReference type="ChEBI" id="CHEBI:30616"/>
    </ligand>
</feature>
<feature type="binding site" evidence="1">
    <location>
        <position position="99"/>
    </location>
    <ligand>
        <name>L-citrulline</name>
        <dbReference type="ChEBI" id="CHEBI:57743"/>
    </ligand>
</feature>
<feature type="binding site" evidence="1">
    <location>
        <position position="129"/>
    </location>
    <ligand>
        <name>ATP</name>
        <dbReference type="ChEBI" id="CHEBI:30616"/>
    </ligand>
</feature>
<feature type="binding site" evidence="1">
    <location>
        <position position="131"/>
    </location>
    <ligand>
        <name>ATP</name>
        <dbReference type="ChEBI" id="CHEBI:30616"/>
    </ligand>
</feature>
<feature type="binding site" evidence="1">
    <location>
        <position position="131"/>
    </location>
    <ligand>
        <name>L-aspartate</name>
        <dbReference type="ChEBI" id="CHEBI:29991"/>
    </ligand>
</feature>
<feature type="binding site" evidence="1">
    <location>
        <position position="135"/>
    </location>
    <ligand>
        <name>L-aspartate</name>
        <dbReference type="ChEBI" id="CHEBI:29991"/>
    </ligand>
</feature>
<feature type="binding site" evidence="1">
    <location>
        <position position="135"/>
    </location>
    <ligand>
        <name>L-citrulline</name>
        <dbReference type="ChEBI" id="CHEBI:57743"/>
    </ligand>
</feature>
<feature type="binding site" evidence="1">
    <location>
        <position position="136"/>
    </location>
    <ligand>
        <name>ATP</name>
        <dbReference type="ChEBI" id="CHEBI:30616"/>
    </ligand>
</feature>
<feature type="binding site" evidence="1">
    <location>
        <position position="136"/>
    </location>
    <ligand>
        <name>L-aspartate</name>
        <dbReference type="ChEBI" id="CHEBI:29991"/>
    </ligand>
</feature>
<feature type="binding site" evidence="1">
    <location>
        <position position="139"/>
    </location>
    <ligand>
        <name>L-citrulline</name>
        <dbReference type="ChEBI" id="CHEBI:57743"/>
    </ligand>
</feature>
<feature type="binding site" evidence="1">
    <location>
        <position position="192"/>
    </location>
    <ligand>
        <name>L-citrulline</name>
        <dbReference type="ChEBI" id="CHEBI:57743"/>
    </ligand>
</feature>
<feature type="binding site" evidence="1">
    <location>
        <position position="194"/>
    </location>
    <ligand>
        <name>ATP</name>
        <dbReference type="ChEBI" id="CHEBI:30616"/>
    </ligand>
</feature>
<feature type="binding site" evidence="1">
    <location>
        <position position="201"/>
    </location>
    <ligand>
        <name>L-citrulline</name>
        <dbReference type="ChEBI" id="CHEBI:57743"/>
    </ligand>
</feature>
<feature type="binding site" evidence="1">
    <location>
        <position position="203"/>
    </location>
    <ligand>
        <name>L-citrulline</name>
        <dbReference type="ChEBI" id="CHEBI:57743"/>
    </ligand>
</feature>
<feature type="binding site" evidence="1">
    <location>
        <position position="280"/>
    </location>
    <ligand>
        <name>L-citrulline</name>
        <dbReference type="ChEBI" id="CHEBI:57743"/>
    </ligand>
</feature>
<keyword id="KW-0028">Amino-acid biosynthesis</keyword>
<keyword id="KW-0055">Arginine biosynthesis</keyword>
<keyword id="KW-0067">ATP-binding</keyword>
<keyword id="KW-0963">Cytoplasm</keyword>
<keyword id="KW-0436">Ligase</keyword>
<keyword id="KW-0547">Nucleotide-binding</keyword>
<gene>
    <name evidence="1" type="primary">argG</name>
    <name type="ordered locus">SBO_3210</name>
</gene>
<name>ASSY_SHIBS</name>
<organism>
    <name type="scientific">Shigella boydii serotype 4 (strain Sb227)</name>
    <dbReference type="NCBI Taxonomy" id="300268"/>
    <lineage>
        <taxon>Bacteria</taxon>
        <taxon>Pseudomonadati</taxon>
        <taxon>Pseudomonadota</taxon>
        <taxon>Gammaproteobacteria</taxon>
        <taxon>Enterobacterales</taxon>
        <taxon>Enterobacteriaceae</taxon>
        <taxon>Shigella</taxon>
    </lineage>
</organism>
<accession>Q31W50</accession>
<comment type="catalytic activity">
    <reaction evidence="1">
        <text>L-citrulline + L-aspartate + ATP = 2-(N(omega)-L-arginino)succinate + AMP + diphosphate + H(+)</text>
        <dbReference type="Rhea" id="RHEA:10932"/>
        <dbReference type="ChEBI" id="CHEBI:15378"/>
        <dbReference type="ChEBI" id="CHEBI:29991"/>
        <dbReference type="ChEBI" id="CHEBI:30616"/>
        <dbReference type="ChEBI" id="CHEBI:33019"/>
        <dbReference type="ChEBI" id="CHEBI:57472"/>
        <dbReference type="ChEBI" id="CHEBI:57743"/>
        <dbReference type="ChEBI" id="CHEBI:456215"/>
        <dbReference type="EC" id="6.3.4.5"/>
    </reaction>
</comment>
<comment type="pathway">
    <text evidence="1">Amino-acid biosynthesis; L-arginine biosynthesis; L-arginine from L-ornithine and carbamoyl phosphate: step 2/3.</text>
</comment>
<comment type="subunit">
    <text evidence="1">Homotetramer.</text>
</comment>
<comment type="subcellular location">
    <subcellularLocation>
        <location evidence="1">Cytoplasm</location>
    </subcellularLocation>
</comment>
<comment type="similarity">
    <text evidence="1">Belongs to the argininosuccinate synthase family. Type 2 subfamily.</text>
</comment>
<reference key="1">
    <citation type="journal article" date="2005" name="Nucleic Acids Res.">
        <title>Genome dynamics and diversity of Shigella species, the etiologic agents of bacillary dysentery.</title>
        <authorList>
            <person name="Yang F."/>
            <person name="Yang J."/>
            <person name="Zhang X."/>
            <person name="Chen L."/>
            <person name="Jiang Y."/>
            <person name="Yan Y."/>
            <person name="Tang X."/>
            <person name="Wang J."/>
            <person name="Xiong Z."/>
            <person name="Dong J."/>
            <person name="Xue Y."/>
            <person name="Zhu Y."/>
            <person name="Xu X."/>
            <person name="Sun L."/>
            <person name="Chen S."/>
            <person name="Nie H."/>
            <person name="Peng J."/>
            <person name="Xu J."/>
            <person name="Wang Y."/>
            <person name="Yuan Z."/>
            <person name="Wen Y."/>
            <person name="Yao Z."/>
            <person name="Shen Y."/>
            <person name="Qiang B."/>
            <person name="Hou Y."/>
            <person name="Yu J."/>
            <person name="Jin Q."/>
        </authorList>
    </citation>
    <scope>NUCLEOTIDE SEQUENCE [LARGE SCALE GENOMIC DNA]</scope>
    <source>
        <strain>Sb227</strain>
    </source>
</reference>
<dbReference type="EC" id="6.3.4.5" evidence="1"/>
<dbReference type="EMBL" id="CP000036">
    <property type="protein sequence ID" value="ABB67708.1"/>
    <property type="molecule type" value="Genomic_DNA"/>
</dbReference>
<dbReference type="RefSeq" id="WP_000207691.1">
    <property type="nucleotide sequence ID" value="NC_007613.1"/>
</dbReference>
<dbReference type="SMR" id="Q31W50"/>
<dbReference type="KEGG" id="sbo:SBO_3210"/>
<dbReference type="HOGENOM" id="CLU_032784_4_1_6"/>
<dbReference type="UniPathway" id="UPA00068">
    <property type="reaction ID" value="UER00113"/>
</dbReference>
<dbReference type="Proteomes" id="UP000007067">
    <property type="component" value="Chromosome"/>
</dbReference>
<dbReference type="GO" id="GO:0005737">
    <property type="term" value="C:cytoplasm"/>
    <property type="evidence" value="ECO:0007669"/>
    <property type="project" value="UniProtKB-SubCell"/>
</dbReference>
<dbReference type="GO" id="GO:0004055">
    <property type="term" value="F:argininosuccinate synthase activity"/>
    <property type="evidence" value="ECO:0007669"/>
    <property type="project" value="UniProtKB-UniRule"/>
</dbReference>
<dbReference type="GO" id="GO:0005524">
    <property type="term" value="F:ATP binding"/>
    <property type="evidence" value="ECO:0007669"/>
    <property type="project" value="UniProtKB-UniRule"/>
</dbReference>
<dbReference type="GO" id="GO:0042803">
    <property type="term" value="F:protein homodimerization activity"/>
    <property type="evidence" value="ECO:0007669"/>
    <property type="project" value="InterPro"/>
</dbReference>
<dbReference type="GO" id="GO:0000053">
    <property type="term" value="P:argininosuccinate metabolic process"/>
    <property type="evidence" value="ECO:0007669"/>
    <property type="project" value="TreeGrafter"/>
</dbReference>
<dbReference type="GO" id="GO:0006526">
    <property type="term" value="P:L-arginine biosynthetic process"/>
    <property type="evidence" value="ECO:0007669"/>
    <property type="project" value="UniProtKB-UniRule"/>
</dbReference>
<dbReference type="GO" id="GO:0000050">
    <property type="term" value="P:urea cycle"/>
    <property type="evidence" value="ECO:0007669"/>
    <property type="project" value="TreeGrafter"/>
</dbReference>
<dbReference type="CDD" id="cd01999">
    <property type="entry name" value="ASS"/>
    <property type="match status" value="1"/>
</dbReference>
<dbReference type="FunFam" id="1.10.287.400:FF:000001">
    <property type="entry name" value="Argininosuccinate synthase"/>
    <property type="match status" value="1"/>
</dbReference>
<dbReference type="Gene3D" id="1.10.287.400">
    <property type="match status" value="1"/>
</dbReference>
<dbReference type="Gene3D" id="3.90.1260.10">
    <property type="entry name" value="Argininosuccinate synthetase, chain A, domain 2"/>
    <property type="match status" value="1"/>
</dbReference>
<dbReference type="Gene3D" id="3.40.50.620">
    <property type="entry name" value="HUPs"/>
    <property type="match status" value="1"/>
</dbReference>
<dbReference type="HAMAP" id="MF_00581">
    <property type="entry name" value="Arg_succ_synth_type2"/>
    <property type="match status" value="1"/>
</dbReference>
<dbReference type="InterPro" id="IPR023437">
    <property type="entry name" value="Arg_succ_synth_type2_subfam"/>
</dbReference>
<dbReference type="InterPro" id="IPR048268">
    <property type="entry name" value="Arginosuc_syn_C"/>
</dbReference>
<dbReference type="InterPro" id="IPR048267">
    <property type="entry name" value="Arginosuc_syn_N"/>
</dbReference>
<dbReference type="InterPro" id="IPR001518">
    <property type="entry name" value="Arginosuc_synth"/>
</dbReference>
<dbReference type="InterPro" id="IPR018223">
    <property type="entry name" value="Arginosuc_synth_CS"/>
</dbReference>
<dbReference type="InterPro" id="IPR023434">
    <property type="entry name" value="Arginosuc_synth_type_1_subfam"/>
</dbReference>
<dbReference type="InterPro" id="IPR024074">
    <property type="entry name" value="AS_cat/multimer_dom_body"/>
</dbReference>
<dbReference type="InterPro" id="IPR024073">
    <property type="entry name" value="AS_multimer_C_tail"/>
</dbReference>
<dbReference type="InterPro" id="IPR014729">
    <property type="entry name" value="Rossmann-like_a/b/a_fold"/>
</dbReference>
<dbReference type="NCBIfam" id="TIGR00032">
    <property type="entry name" value="argG"/>
    <property type="match status" value="1"/>
</dbReference>
<dbReference type="NCBIfam" id="NF003779">
    <property type="entry name" value="PRK05370.1"/>
    <property type="match status" value="1"/>
</dbReference>
<dbReference type="PANTHER" id="PTHR11587">
    <property type="entry name" value="ARGININOSUCCINATE SYNTHASE"/>
    <property type="match status" value="1"/>
</dbReference>
<dbReference type="PANTHER" id="PTHR11587:SF2">
    <property type="entry name" value="ARGININOSUCCINATE SYNTHASE"/>
    <property type="match status" value="1"/>
</dbReference>
<dbReference type="Pfam" id="PF20979">
    <property type="entry name" value="Arginosuc_syn_C"/>
    <property type="match status" value="1"/>
</dbReference>
<dbReference type="Pfam" id="PF00764">
    <property type="entry name" value="Arginosuc_synth"/>
    <property type="match status" value="1"/>
</dbReference>
<dbReference type="SUPFAM" id="SSF52402">
    <property type="entry name" value="Adenine nucleotide alpha hydrolases-like"/>
    <property type="match status" value="1"/>
</dbReference>
<dbReference type="SUPFAM" id="SSF69864">
    <property type="entry name" value="Argininosuccinate synthetase, C-terminal domain"/>
    <property type="match status" value="1"/>
</dbReference>
<dbReference type="PROSITE" id="PS00564">
    <property type="entry name" value="ARGININOSUCCIN_SYN_1"/>
    <property type="match status" value="1"/>
</dbReference>
<dbReference type="PROSITE" id="PS00565">
    <property type="entry name" value="ARGININOSUCCIN_SYN_2"/>
    <property type="match status" value="1"/>
</dbReference>